<reference key="1">
    <citation type="journal article" date="1999" name="J. Biol. Chem.">
        <title>Identification of the human YVH1 protein-tyrosine phosphatase orthologue reveals a novel zinc binding domain essential for in vivo function.</title>
        <authorList>
            <person name="Muda M."/>
            <person name="Manning E.R."/>
            <person name="Orth K."/>
            <person name="Dixon J.E."/>
        </authorList>
    </citation>
    <scope>NUCLEOTIDE SEQUENCE [MRNA]</scope>
    <scope>CHARACTERIZATION</scope>
    <scope>ZINC-BINDING</scope>
    <scope>SUBCELLULAR LOCATION</scope>
</reference>
<reference key="2">
    <citation type="submission" date="2003-05" db="EMBL/GenBank/DDBJ databases">
        <title>Cloning of human full-length CDSs in BD Creator(TM) system donor vector.</title>
        <authorList>
            <person name="Kalnine N."/>
            <person name="Chen X."/>
            <person name="Rolfs A."/>
            <person name="Halleck A."/>
            <person name="Hines L."/>
            <person name="Eisenstein S."/>
            <person name="Koundinya M."/>
            <person name="Raphael J."/>
            <person name="Moreira D."/>
            <person name="Kelley T."/>
            <person name="LaBaer J."/>
            <person name="Lin Y."/>
            <person name="Phelan M."/>
            <person name="Farmer A."/>
        </authorList>
    </citation>
    <scope>NUCLEOTIDE SEQUENCE [LARGE SCALE MRNA]</scope>
</reference>
<reference key="3">
    <citation type="journal article" date="2006" name="Nature">
        <title>The DNA sequence and biological annotation of human chromosome 1.</title>
        <authorList>
            <person name="Gregory S.G."/>
            <person name="Barlow K.F."/>
            <person name="McLay K.E."/>
            <person name="Kaul R."/>
            <person name="Swarbreck D."/>
            <person name="Dunham A."/>
            <person name="Scott C.E."/>
            <person name="Howe K.L."/>
            <person name="Woodfine K."/>
            <person name="Spencer C.C.A."/>
            <person name="Jones M.C."/>
            <person name="Gillson C."/>
            <person name="Searle S."/>
            <person name="Zhou Y."/>
            <person name="Kokocinski F."/>
            <person name="McDonald L."/>
            <person name="Evans R."/>
            <person name="Phillips K."/>
            <person name="Atkinson A."/>
            <person name="Cooper R."/>
            <person name="Jones C."/>
            <person name="Hall R.E."/>
            <person name="Andrews T.D."/>
            <person name="Lloyd C."/>
            <person name="Ainscough R."/>
            <person name="Almeida J.P."/>
            <person name="Ambrose K.D."/>
            <person name="Anderson F."/>
            <person name="Andrew R.W."/>
            <person name="Ashwell R.I.S."/>
            <person name="Aubin K."/>
            <person name="Babbage A.K."/>
            <person name="Bagguley C.L."/>
            <person name="Bailey J."/>
            <person name="Beasley H."/>
            <person name="Bethel G."/>
            <person name="Bird C.P."/>
            <person name="Bray-Allen S."/>
            <person name="Brown J.Y."/>
            <person name="Brown A.J."/>
            <person name="Buckley D."/>
            <person name="Burton J."/>
            <person name="Bye J."/>
            <person name="Carder C."/>
            <person name="Chapman J.C."/>
            <person name="Clark S.Y."/>
            <person name="Clarke G."/>
            <person name="Clee C."/>
            <person name="Cobley V."/>
            <person name="Collier R.E."/>
            <person name="Corby N."/>
            <person name="Coville G.J."/>
            <person name="Davies J."/>
            <person name="Deadman R."/>
            <person name="Dunn M."/>
            <person name="Earthrowl M."/>
            <person name="Ellington A.G."/>
            <person name="Errington H."/>
            <person name="Frankish A."/>
            <person name="Frankland J."/>
            <person name="French L."/>
            <person name="Garner P."/>
            <person name="Garnett J."/>
            <person name="Gay L."/>
            <person name="Ghori M.R.J."/>
            <person name="Gibson R."/>
            <person name="Gilby L.M."/>
            <person name="Gillett W."/>
            <person name="Glithero R.J."/>
            <person name="Grafham D.V."/>
            <person name="Griffiths C."/>
            <person name="Griffiths-Jones S."/>
            <person name="Grocock R."/>
            <person name="Hammond S."/>
            <person name="Harrison E.S.I."/>
            <person name="Hart E."/>
            <person name="Haugen E."/>
            <person name="Heath P.D."/>
            <person name="Holmes S."/>
            <person name="Holt K."/>
            <person name="Howden P.J."/>
            <person name="Hunt A.R."/>
            <person name="Hunt S.E."/>
            <person name="Hunter G."/>
            <person name="Isherwood J."/>
            <person name="James R."/>
            <person name="Johnson C."/>
            <person name="Johnson D."/>
            <person name="Joy A."/>
            <person name="Kay M."/>
            <person name="Kershaw J.K."/>
            <person name="Kibukawa M."/>
            <person name="Kimberley A.M."/>
            <person name="King A."/>
            <person name="Knights A.J."/>
            <person name="Lad H."/>
            <person name="Laird G."/>
            <person name="Lawlor S."/>
            <person name="Leongamornlert D.A."/>
            <person name="Lloyd D.M."/>
            <person name="Loveland J."/>
            <person name="Lovell J."/>
            <person name="Lush M.J."/>
            <person name="Lyne R."/>
            <person name="Martin S."/>
            <person name="Mashreghi-Mohammadi M."/>
            <person name="Matthews L."/>
            <person name="Matthews N.S.W."/>
            <person name="McLaren S."/>
            <person name="Milne S."/>
            <person name="Mistry S."/>
            <person name="Moore M.J.F."/>
            <person name="Nickerson T."/>
            <person name="O'Dell C.N."/>
            <person name="Oliver K."/>
            <person name="Palmeiri A."/>
            <person name="Palmer S.A."/>
            <person name="Parker A."/>
            <person name="Patel D."/>
            <person name="Pearce A.V."/>
            <person name="Peck A.I."/>
            <person name="Pelan S."/>
            <person name="Phelps K."/>
            <person name="Phillimore B.J."/>
            <person name="Plumb R."/>
            <person name="Rajan J."/>
            <person name="Raymond C."/>
            <person name="Rouse G."/>
            <person name="Saenphimmachak C."/>
            <person name="Sehra H.K."/>
            <person name="Sheridan E."/>
            <person name="Shownkeen R."/>
            <person name="Sims S."/>
            <person name="Skuce C.D."/>
            <person name="Smith M."/>
            <person name="Steward C."/>
            <person name="Subramanian S."/>
            <person name="Sycamore N."/>
            <person name="Tracey A."/>
            <person name="Tromans A."/>
            <person name="Van Helmond Z."/>
            <person name="Wall M."/>
            <person name="Wallis J.M."/>
            <person name="White S."/>
            <person name="Whitehead S.L."/>
            <person name="Wilkinson J.E."/>
            <person name="Willey D.L."/>
            <person name="Williams H."/>
            <person name="Wilming L."/>
            <person name="Wray P.W."/>
            <person name="Wu Z."/>
            <person name="Coulson A."/>
            <person name="Vaudin M."/>
            <person name="Sulston J.E."/>
            <person name="Durbin R.M."/>
            <person name="Hubbard T."/>
            <person name="Wooster R."/>
            <person name="Dunham I."/>
            <person name="Carter N.P."/>
            <person name="McVean G."/>
            <person name="Ross M.T."/>
            <person name="Harrow J."/>
            <person name="Olson M.V."/>
            <person name="Beck S."/>
            <person name="Rogers J."/>
            <person name="Bentley D.R."/>
        </authorList>
    </citation>
    <scope>NUCLEOTIDE SEQUENCE [LARGE SCALE GENOMIC DNA]</scope>
</reference>
<reference key="4">
    <citation type="journal article" date="2004" name="Genome Res.">
        <title>The status, quality, and expansion of the NIH full-length cDNA project: the Mammalian Gene Collection (MGC).</title>
        <authorList>
            <consortium name="The MGC Project Team"/>
        </authorList>
    </citation>
    <scope>NUCLEOTIDE SEQUENCE [LARGE SCALE MRNA]</scope>
    <source>
        <tissue>Placenta</tissue>
    </source>
</reference>
<reference key="5">
    <citation type="journal article" date="2009" name="Anal. Chem.">
        <title>Lys-N and trypsin cover complementary parts of the phosphoproteome in a refined SCX-based approach.</title>
        <authorList>
            <person name="Gauci S."/>
            <person name="Helbig A.O."/>
            <person name="Slijper M."/>
            <person name="Krijgsveld J."/>
            <person name="Heck A.J."/>
            <person name="Mohammed S."/>
        </authorList>
    </citation>
    <scope>ACETYLATION [LARGE SCALE ANALYSIS] AT MET-1</scope>
    <scope>IDENTIFICATION BY MASS SPECTROMETRY [LARGE SCALE ANALYSIS]</scope>
</reference>
<reference key="6">
    <citation type="journal article" date="2011" name="BMC Syst. Biol.">
        <title>Initial characterization of the human central proteome.</title>
        <authorList>
            <person name="Burkard T.R."/>
            <person name="Planyavsky M."/>
            <person name="Kaupe I."/>
            <person name="Breitwieser F.P."/>
            <person name="Buerckstuemmer T."/>
            <person name="Bennett K.L."/>
            <person name="Superti-Furga G."/>
            <person name="Colinge J."/>
        </authorList>
    </citation>
    <scope>IDENTIFICATION BY MASS SPECTROMETRY [LARGE SCALE ANALYSIS]</scope>
</reference>
<reference key="7">
    <citation type="journal article" date="2012" name="Mol. Cell. Proteomics">
        <title>Comparative large-scale characterisation of plant vs. mammal proteins reveals similar and idiosyncratic N-alpha acetylation features.</title>
        <authorList>
            <person name="Bienvenut W.V."/>
            <person name="Sumpton D."/>
            <person name="Martinez A."/>
            <person name="Lilla S."/>
            <person name="Espagne C."/>
            <person name="Meinnel T."/>
            <person name="Giglione C."/>
        </authorList>
    </citation>
    <scope>ACETYLATION [LARGE SCALE ANALYSIS] AT MET-1</scope>
    <scope>IDENTIFICATION BY MASS SPECTROMETRY [LARGE SCALE ANALYSIS]</scope>
</reference>
<reference key="8">
    <citation type="journal article" date="2012" name="Proc. Natl. Acad. Sci. U.S.A.">
        <title>N-terminal acetylome analyses and functional insights of the N-terminal acetyltransferase NatB.</title>
        <authorList>
            <person name="Van Damme P."/>
            <person name="Lasa M."/>
            <person name="Polevoda B."/>
            <person name="Gazquez C."/>
            <person name="Elosegui-Artola A."/>
            <person name="Kim D.S."/>
            <person name="De Juan-Pardo E."/>
            <person name="Demeyer K."/>
            <person name="Hole K."/>
            <person name="Larrea E."/>
            <person name="Timmerman E."/>
            <person name="Prieto J."/>
            <person name="Arnesen T."/>
            <person name="Sherman F."/>
            <person name="Gevaert K."/>
            <person name="Aldabe R."/>
        </authorList>
    </citation>
    <scope>ACETYLATION [LARGE SCALE ANALYSIS] AT MET-1</scope>
    <scope>IDENTIFICATION BY MASS SPECTROMETRY [LARGE SCALE ANALYSIS]</scope>
</reference>
<reference key="9">
    <citation type="journal article" date="2013" name="J. Proteome Res.">
        <title>Toward a comprehensive characterization of a human cancer cell phosphoproteome.</title>
        <authorList>
            <person name="Zhou H."/>
            <person name="Di Palma S."/>
            <person name="Preisinger C."/>
            <person name="Peng M."/>
            <person name="Polat A.N."/>
            <person name="Heck A.J."/>
            <person name="Mohammed S."/>
        </authorList>
    </citation>
    <scope>PHOSPHORYLATION [LARGE SCALE ANALYSIS] AT SER-335</scope>
    <scope>IDENTIFICATION BY MASS SPECTROMETRY [LARGE SCALE ANALYSIS]</scope>
    <source>
        <tissue>Erythroleukemia</tissue>
    </source>
</reference>
<reference evidence="7 8" key="10">
    <citation type="journal article" date="2014" name="Acta Crystallogr. D">
        <title>The family-wide structure and function of human dual-specificity protein phosphatases.</title>
        <authorList>
            <person name="Jeong D.G."/>
            <person name="Wei C.H."/>
            <person name="Ku B."/>
            <person name="Jeon T.J."/>
            <person name="Chien P.N."/>
            <person name="Kim J.K."/>
            <person name="Park S.Y."/>
            <person name="Hwang H.S."/>
            <person name="Ryu S.Y."/>
            <person name="Park H."/>
            <person name="Kim D.S."/>
            <person name="Kim S.J."/>
            <person name="Ryu S.E."/>
        </authorList>
    </citation>
    <scope>X-RAY CRYSTALLOGRAPHY (2.00 ANGSTROMS) OF 27-189 IN COMPLEX WITH PHOSPHATE</scope>
    <scope>FUNCTION</scope>
    <scope>SUBUNIT</scope>
</reference>
<comment type="function">
    <text evidence="1 3 4">Dual specificity phosphatase; can dephosphorylate both phosphotyrosine and phosphoserine or phosphothreonine residues. Can dephosphorylate glucokinase (in vitro) (By similarity). Has phosphatase activity with the synthetic substrate 6,8-difluoro-4-methylumbelliferyl phosphate and other in vitro substrates (PubMed:10446167, PubMed:24531476).</text>
</comment>
<comment type="catalytic activity">
    <reaction evidence="1">
        <text>O-phospho-L-tyrosyl-[protein] + H2O = L-tyrosyl-[protein] + phosphate</text>
        <dbReference type="Rhea" id="RHEA:10684"/>
        <dbReference type="Rhea" id="RHEA-COMP:10136"/>
        <dbReference type="Rhea" id="RHEA-COMP:20101"/>
        <dbReference type="ChEBI" id="CHEBI:15377"/>
        <dbReference type="ChEBI" id="CHEBI:43474"/>
        <dbReference type="ChEBI" id="CHEBI:46858"/>
        <dbReference type="ChEBI" id="CHEBI:61978"/>
        <dbReference type="EC" id="3.1.3.48"/>
    </reaction>
</comment>
<comment type="catalytic activity">
    <reaction evidence="1">
        <text>O-phospho-L-seryl-[protein] + H2O = L-seryl-[protein] + phosphate</text>
        <dbReference type="Rhea" id="RHEA:20629"/>
        <dbReference type="Rhea" id="RHEA-COMP:9863"/>
        <dbReference type="Rhea" id="RHEA-COMP:11604"/>
        <dbReference type="ChEBI" id="CHEBI:15377"/>
        <dbReference type="ChEBI" id="CHEBI:29999"/>
        <dbReference type="ChEBI" id="CHEBI:43474"/>
        <dbReference type="ChEBI" id="CHEBI:83421"/>
        <dbReference type="EC" id="3.1.3.16"/>
    </reaction>
</comment>
<comment type="catalytic activity">
    <reaction evidence="1">
        <text>O-phospho-L-threonyl-[protein] + H2O = L-threonyl-[protein] + phosphate</text>
        <dbReference type="Rhea" id="RHEA:47004"/>
        <dbReference type="Rhea" id="RHEA-COMP:11060"/>
        <dbReference type="Rhea" id="RHEA-COMP:11605"/>
        <dbReference type="ChEBI" id="CHEBI:15377"/>
        <dbReference type="ChEBI" id="CHEBI:30013"/>
        <dbReference type="ChEBI" id="CHEBI:43474"/>
        <dbReference type="ChEBI" id="CHEBI:61977"/>
        <dbReference type="EC" id="3.1.3.16"/>
    </reaction>
</comment>
<comment type="cofactor">
    <cofactor>
        <name>Zn(2+)</name>
        <dbReference type="ChEBI" id="CHEBI:29105"/>
    </cofactor>
    <text>Binds 2 Zn(2+) ions per subunit.</text>
</comment>
<comment type="subunit">
    <text evidence="4">Monomer.</text>
</comment>
<comment type="interaction">
    <interactant intactId="EBI-715161">
        <id>Q9UNI6</id>
    </interactant>
    <interactant intactId="EBI-739580">
        <id>Q13137</id>
        <label>CALCOCO2</label>
    </interactant>
    <organismsDiffer>false</organismsDiffer>
    <experiments>5</experiments>
</comment>
<comment type="interaction">
    <interactant intactId="EBI-715161">
        <id>Q9UNI6</id>
    </interactant>
    <interactant intactId="EBI-741406">
        <id>P51946</id>
        <label>CCNH</label>
    </interactant>
    <organismsDiffer>false</organismsDiffer>
    <experiments>7</experiments>
</comment>
<comment type="interaction">
    <interactant intactId="EBI-715161">
        <id>Q9UNI6</id>
    </interactant>
    <interactant intactId="EBI-286450">
        <id>P55010</id>
        <label>EIF5</label>
    </interactant>
    <organismsDiffer>false</organismsDiffer>
    <experiments>6</experiments>
</comment>
<comment type="interaction">
    <interactant intactId="EBI-715161">
        <id>Q9UNI6</id>
    </interactant>
    <interactant intactId="EBI-739074">
        <id>Q9UJY1</id>
        <label>HSPB8</label>
    </interactant>
    <organismsDiffer>false</organismsDiffer>
    <experiments>3</experiments>
</comment>
<comment type="interaction">
    <interactant intactId="EBI-715161">
        <id>Q9UNI6</id>
    </interactant>
    <interactant intactId="EBI-2907262">
        <id>P20645</id>
        <label>M6PR</label>
    </interactant>
    <organismsDiffer>false</organismsDiffer>
    <experiments>3</experiments>
</comment>
<comment type="interaction">
    <interactant intactId="EBI-715161">
        <id>Q9UNI6</id>
    </interactant>
    <interactant intactId="EBI-2479826">
        <id>Q9Y5P8</id>
        <label>PPP2R3B</label>
    </interactant>
    <organismsDiffer>false</organismsDiffer>
    <experiments>4</experiments>
</comment>
<comment type="interaction">
    <interactant intactId="EBI-715161">
        <id>Q9UNI6</id>
    </interactant>
    <interactant intactId="EBI-712367">
        <id>Q9UI14</id>
        <label>RABAC1</label>
    </interactant>
    <organismsDiffer>false</organismsDiffer>
    <experiments>7</experiments>
</comment>
<comment type="interaction">
    <interactant intactId="EBI-715161">
        <id>Q9UNI6</id>
    </interactant>
    <interactant intactId="EBI-356164">
        <id>O60763</id>
        <label>USO1</label>
    </interactant>
    <organismsDiffer>false</organismsDiffer>
    <experiments>3</experiments>
</comment>
<comment type="subcellular location">
    <subcellularLocation>
        <location evidence="3">Nucleus</location>
    </subcellularLocation>
    <subcellularLocation>
        <location evidence="3">Cytoplasm</location>
        <location evidence="3">Cytosol</location>
    </subcellularLocation>
    <text evidence="3">Primarily nuclear. Detected in a mesh-like pattern in the cytosol.</text>
</comment>
<comment type="tissue specificity">
    <text>Ubiquitous, highest expression in spleen, testis, ovary, and peripheral blood leukocytes and lower expression in liver and lung.</text>
</comment>
<comment type="similarity">
    <text evidence="5">Belongs to the protein-tyrosine phosphatase family. Non-receptor class dual specificity subfamily.</text>
</comment>
<proteinExistence type="evidence at protein level"/>
<name>DUS12_HUMAN</name>
<sequence>MLEAPGPSDGCELSNPSASRVSCAGQMLEVQPGLYFGGAAAVAEPDHLREAGITAVLTVDSEEPSFKAGPGVEDLWRLFVPALDKPETDLLSHLDRCVAFIGQARAEGRAVLVHCHAGVSRSVAIITAFLMKTDQLPFEKAYEKLQILKPEAKMNEGFEWQLKLYQAMGYEVDTSSAIYKQYRLQKVTEKYPELQNLPQELFAVDPTTVSQGLKDEVLYKCRKCRRSLFRSSSILDHREGSGPIAFAHKRMTPSSMLTTGRQAQCTSYFIEPVQWMESALLGVMDGQLLCPKCSAKLGSFNWYGEQCSCGRWITPAFQIHKNRVDEMKILPVLGSQTGKI</sequence>
<protein>
    <recommendedName>
        <fullName>Dual specificity protein phosphatase 12</fullName>
        <ecNumber evidence="1">3.1.3.16</ecNumber>
        <ecNumber evidence="1">3.1.3.48</ecNumber>
    </recommendedName>
    <alternativeName>
        <fullName>Dual specificity tyrosine phosphatase YVH1</fullName>
    </alternativeName>
</protein>
<organism>
    <name type="scientific">Homo sapiens</name>
    <name type="common">Human</name>
    <dbReference type="NCBI Taxonomy" id="9606"/>
    <lineage>
        <taxon>Eukaryota</taxon>
        <taxon>Metazoa</taxon>
        <taxon>Chordata</taxon>
        <taxon>Craniata</taxon>
        <taxon>Vertebrata</taxon>
        <taxon>Euteleostomi</taxon>
        <taxon>Mammalia</taxon>
        <taxon>Eutheria</taxon>
        <taxon>Euarchontoglires</taxon>
        <taxon>Primates</taxon>
        <taxon>Haplorrhini</taxon>
        <taxon>Catarrhini</taxon>
        <taxon>Hominidae</taxon>
        <taxon>Homo</taxon>
    </lineage>
</organism>
<keyword id="KW-0002">3D-structure</keyword>
<keyword id="KW-0007">Acetylation</keyword>
<keyword id="KW-0963">Cytoplasm</keyword>
<keyword id="KW-0378">Hydrolase</keyword>
<keyword id="KW-0479">Metal-binding</keyword>
<keyword id="KW-0539">Nucleus</keyword>
<keyword id="KW-0597">Phosphoprotein</keyword>
<keyword id="KW-0904">Protein phosphatase</keyword>
<keyword id="KW-1267">Proteomics identification</keyword>
<keyword id="KW-1185">Reference proteome</keyword>
<keyword id="KW-0862">Zinc</keyword>
<feature type="chain" id="PRO_0000094818" description="Dual specificity protein phosphatase 12">
    <location>
        <begin position="1"/>
        <end position="340"/>
    </location>
</feature>
<feature type="domain" description="Tyrosine-protein phosphatase" evidence="2">
    <location>
        <begin position="26"/>
        <end position="171"/>
    </location>
</feature>
<feature type="active site" description="Phosphocysteine intermediate" evidence="2">
    <location>
        <position position="115"/>
    </location>
</feature>
<feature type="binding site" evidence="6 8">
    <location>
        <begin position="116"/>
        <end position="121"/>
    </location>
    <ligand>
        <name>substrate</name>
    </ligand>
</feature>
<feature type="modified residue" description="N-acetylmethionine" evidence="9 10 11">
    <location>
        <position position="1"/>
    </location>
</feature>
<feature type="modified residue" description="Phosphoserine" evidence="12">
    <location>
        <position position="335"/>
    </location>
</feature>
<feature type="sequence variant" id="VAR_033899" description="In dbSNP:rs35106830.">
    <original>A</original>
    <variation>E</variation>
    <location>
        <position position="51"/>
    </location>
</feature>
<feature type="strand" evidence="13">
    <location>
        <begin position="28"/>
        <end position="31"/>
    </location>
</feature>
<feature type="strand" evidence="13">
    <location>
        <begin position="34"/>
        <end position="37"/>
    </location>
</feature>
<feature type="helix" evidence="13">
    <location>
        <begin position="39"/>
        <end position="43"/>
    </location>
</feature>
<feature type="helix" evidence="13">
    <location>
        <begin position="45"/>
        <end position="51"/>
    </location>
</feature>
<feature type="strand" evidence="13">
    <location>
        <begin position="53"/>
        <end position="62"/>
    </location>
</feature>
<feature type="strand" evidence="13">
    <location>
        <begin position="76"/>
        <end position="81"/>
    </location>
</feature>
<feature type="helix" evidence="13">
    <location>
        <begin position="91"/>
        <end position="93"/>
    </location>
</feature>
<feature type="helix" evidence="13">
    <location>
        <begin position="94"/>
        <end position="106"/>
    </location>
</feature>
<feature type="strand" evidence="13">
    <location>
        <begin position="110"/>
        <end position="114"/>
    </location>
</feature>
<feature type="strand" evidence="13">
    <location>
        <begin position="116"/>
        <end position="120"/>
    </location>
</feature>
<feature type="helix" evidence="13">
    <location>
        <begin position="121"/>
        <end position="134"/>
    </location>
</feature>
<feature type="helix" evidence="13">
    <location>
        <begin position="138"/>
        <end position="148"/>
    </location>
</feature>
<feature type="helix" evidence="13">
    <location>
        <begin position="156"/>
        <end position="167"/>
    </location>
</feature>
<feature type="helix" evidence="13">
    <location>
        <begin position="177"/>
        <end position="186"/>
    </location>
</feature>
<accession>Q9UNI6</accession>
<accession>Q5VXA8</accession>
<gene>
    <name type="primary">DUSP12</name>
</gene>
<dbReference type="EC" id="3.1.3.16" evidence="1"/>
<dbReference type="EC" id="3.1.3.48" evidence="1"/>
<dbReference type="EMBL" id="AF119226">
    <property type="protein sequence ID" value="AAD51134.1"/>
    <property type="molecule type" value="mRNA"/>
</dbReference>
<dbReference type="EMBL" id="BT006633">
    <property type="protein sequence ID" value="AAP35279.1"/>
    <property type="molecule type" value="mRNA"/>
</dbReference>
<dbReference type="EMBL" id="AL359541">
    <property type="status" value="NOT_ANNOTATED_CDS"/>
    <property type="molecule type" value="Genomic_DNA"/>
</dbReference>
<dbReference type="EMBL" id="BC006286">
    <property type="protein sequence ID" value="AAH06286.1"/>
    <property type="molecule type" value="mRNA"/>
</dbReference>
<dbReference type="CCDS" id="CCDS1234.1"/>
<dbReference type="RefSeq" id="NP_009171.1">
    <property type="nucleotide sequence ID" value="NM_007240.3"/>
</dbReference>
<dbReference type="PDB" id="4JNB">
    <property type="method" value="X-ray"/>
    <property type="resolution" value="3.00 A"/>
    <property type="chains" value="A=27-193"/>
</dbReference>
<dbReference type="PDB" id="4KI9">
    <property type="method" value="X-ray"/>
    <property type="resolution" value="2.00 A"/>
    <property type="chains" value="A=27-189"/>
</dbReference>
<dbReference type="PDBsum" id="4JNB"/>
<dbReference type="PDBsum" id="4KI9"/>
<dbReference type="SMR" id="Q9UNI6"/>
<dbReference type="BioGRID" id="116424">
    <property type="interactions" value="65"/>
</dbReference>
<dbReference type="FunCoup" id="Q9UNI6">
    <property type="interactions" value="3688"/>
</dbReference>
<dbReference type="IntAct" id="Q9UNI6">
    <property type="interactions" value="16"/>
</dbReference>
<dbReference type="MINT" id="Q9UNI6"/>
<dbReference type="STRING" id="9606.ENSP00000356920"/>
<dbReference type="DEPOD" id="DUSP12"/>
<dbReference type="GlyGen" id="Q9UNI6">
    <property type="glycosylation" value="1 site"/>
</dbReference>
<dbReference type="iPTMnet" id="Q9UNI6"/>
<dbReference type="PhosphoSitePlus" id="Q9UNI6"/>
<dbReference type="BioMuta" id="DUSP12"/>
<dbReference type="DMDM" id="9973073"/>
<dbReference type="jPOST" id="Q9UNI6"/>
<dbReference type="MassIVE" id="Q9UNI6"/>
<dbReference type="PaxDb" id="9606-ENSP00000356920"/>
<dbReference type="PeptideAtlas" id="Q9UNI6"/>
<dbReference type="ProteomicsDB" id="85298"/>
<dbReference type="Pumba" id="Q9UNI6"/>
<dbReference type="Antibodypedia" id="1653">
    <property type="antibodies" value="227 antibodies from 25 providers"/>
</dbReference>
<dbReference type="DNASU" id="11266"/>
<dbReference type="Ensembl" id="ENST00000367943.5">
    <property type="protein sequence ID" value="ENSP00000356920.4"/>
    <property type="gene ID" value="ENSG00000081721.12"/>
</dbReference>
<dbReference type="GeneID" id="11266"/>
<dbReference type="KEGG" id="hsa:11266"/>
<dbReference type="MANE-Select" id="ENST00000367943.5">
    <property type="protein sequence ID" value="ENSP00000356920.4"/>
    <property type="RefSeq nucleotide sequence ID" value="NM_007240.3"/>
    <property type="RefSeq protein sequence ID" value="NP_009171.1"/>
</dbReference>
<dbReference type="UCSC" id="uc001gbo.4">
    <property type="organism name" value="human"/>
</dbReference>
<dbReference type="AGR" id="HGNC:3067"/>
<dbReference type="CTD" id="11266"/>
<dbReference type="DisGeNET" id="11266"/>
<dbReference type="GeneCards" id="DUSP12"/>
<dbReference type="HGNC" id="HGNC:3067">
    <property type="gene designation" value="DUSP12"/>
</dbReference>
<dbReference type="HPA" id="ENSG00000081721">
    <property type="expression patterns" value="Low tissue specificity"/>
</dbReference>
<dbReference type="MIM" id="604835">
    <property type="type" value="gene"/>
</dbReference>
<dbReference type="neXtProt" id="NX_Q9UNI6"/>
<dbReference type="OpenTargets" id="ENSG00000081721"/>
<dbReference type="PharmGKB" id="PA27522"/>
<dbReference type="VEuPathDB" id="HostDB:ENSG00000081721"/>
<dbReference type="eggNOG" id="KOG1716">
    <property type="taxonomic scope" value="Eukaryota"/>
</dbReference>
<dbReference type="GeneTree" id="ENSGT00930000151041"/>
<dbReference type="HOGENOM" id="CLU_023312_1_0_1"/>
<dbReference type="InParanoid" id="Q9UNI6"/>
<dbReference type="OMA" id="FAWQGMQ"/>
<dbReference type="OrthoDB" id="2017893at2759"/>
<dbReference type="PAN-GO" id="Q9UNI6">
    <property type="GO annotations" value="4 GO annotations based on evolutionary models"/>
</dbReference>
<dbReference type="PhylomeDB" id="Q9UNI6"/>
<dbReference type="TreeFam" id="TF105123"/>
<dbReference type="PathwayCommons" id="Q9UNI6"/>
<dbReference type="SignaLink" id="Q9UNI6"/>
<dbReference type="SIGNOR" id="Q9UNI6"/>
<dbReference type="BioGRID-ORCS" id="11266">
    <property type="hits" value="66 hits in 1175 CRISPR screens"/>
</dbReference>
<dbReference type="ChiTaRS" id="DUSP12">
    <property type="organism name" value="human"/>
</dbReference>
<dbReference type="EvolutionaryTrace" id="Q9UNI6"/>
<dbReference type="GeneWiki" id="DUSP12"/>
<dbReference type="GenomeRNAi" id="11266"/>
<dbReference type="Pharos" id="Q9UNI6">
    <property type="development level" value="Tbio"/>
</dbReference>
<dbReference type="PRO" id="PR:Q9UNI6"/>
<dbReference type="Proteomes" id="UP000005640">
    <property type="component" value="Chromosome 1"/>
</dbReference>
<dbReference type="RNAct" id="Q9UNI6">
    <property type="molecule type" value="protein"/>
</dbReference>
<dbReference type="Bgee" id="ENSG00000081721">
    <property type="expression patterns" value="Expressed in oocyte and 195 other cell types or tissues"/>
</dbReference>
<dbReference type="ExpressionAtlas" id="Q9UNI6">
    <property type="expression patterns" value="baseline and differential"/>
</dbReference>
<dbReference type="GO" id="GO:0005737">
    <property type="term" value="C:cytoplasm"/>
    <property type="evidence" value="ECO:0000314"/>
    <property type="project" value="UniProtKB"/>
</dbReference>
<dbReference type="GO" id="GO:0005829">
    <property type="term" value="C:cytosol"/>
    <property type="evidence" value="ECO:0007669"/>
    <property type="project" value="UniProtKB-SubCell"/>
</dbReference>
<dbReference type="GO" id="GO:0005654">
    <property type="term" value="C:nucleoplasm"/>
    <property type="evidence" value="ECO:0000314"/>
    <property type="project" value="HPA"/>
</dbReference>
<dbReference type="GO" id="GO:0005634">
    <property type="term" value="C:nucleus"/>
    <property type="evidence" value="ECO:0000314"/>
    <property type="project" value="UniProtKB"/>
</dbReference>
<dbReference type="GO" id="GO:0019900">
    <property type="term" value="F:kinase binding"/>
    <property type="evidence" value="ECO:0007669"/>
    <property type="project" value="Ensembl"/>
</dbReference>
<dbReference type="GO" id="GO:0016791">
    <property type="term" value="F:phosphatase activity"/>
    <property type="evidence" value="ECO:0000314"/>
    <property type="project" value="UniProtKB"/>
</dbReference>
<dbReference type="GO" id="GO:0004722">
    <property type="term" value="F:protein serine/threonine phosphatase activity"/>
    <property type="evidence" value="ECO:0007669"/>
    <property type="project" value="UniProtKB-EC"/>
</dbReference>
<dbReference type="GO" id="GO:0004725">
    <property type="term" value="F:protein tyrosine phosphatase activity"/>
    <property type="evidence" value="ECO:0000304"/>
    <property type="project" value="ProtInc"/>
</dbReference>
<dbReference type="GO" id="GO:0008138">
    <property type="term" value="F:protein tyrosine/serine/threonine phosphatase activity"/>
    <property type="evidence" value="ECO:0000318"/>
    <property type="project" value="GO_Central"/>
</dbReference>
<dbReference type="GO" id="GO:0008270">
    <property type="term" value="F:zinc ion binding"/>
    <property type="evidence" value="ECO:0000314"/>
    <property type="project" value="UniProtKB"/>
</dbReference>
<dbReference type="GO" id="GO:0016311">
    <property type="term" value="P:dephosphorylation"/>
    <property type="evidence" value="ECO:0000314"/>
    <property type="project" value="UniProtKB"/>
</dbReference>
<dbReference type="GO" id="GO:0036211">
    <property type="term" value="P:protein modification process"/>
    <property type="evidence" value="ECO:0000304"/>
    <property type="project" value="ProtInc"/>
</dbReference>
<dbReference type="CDD" id="cd14520">
    <property type="entry name" value="DSP_DUSP12"/>
    <property type="match status" value="1"/>
</dbReference>
<dbReference type="FunFam" id="3.90.190.10:FF:000056">
    <property type="entry name" value="Dual specificity phosphatase 12"/>
    <property type="match status" value="1"/>
</dbReference>
<dbReference type="Gene3D" id="3.90.190.10">
    <property type="entry name" value="Protein tyrosine phosphatase superfamily"/>
    <property type="match status" value="1"/>
</dbReference>
<dbReference type="InterPro" id="IPR000340">
    <property type="entry name" value="Dual-sp_phosphatase_cat-dom"/>
</dbReference>
<dbReference type="InterPro" id="IPR016278">
    <property type="entry name" value="DUSP12"/>
</dbReference>
<dbReference type="InterPro" id="IPR029021">
    <property type="entry name" value="Prot-tyrosine_phosphatase-like"/>
</dbReference>
<dbReference type="InterPro" id="IPR000387">
    <property type="entry name" value="Tyr_Pase_dom"/>
</dbReference>
<dbReference type="InterPro" id="IPR020422">
    <property type="entry name" value="TYR_PHOSPHATASE_DUAL_dom"/>
</dbReference>
<dbReference type="InterPro" id="IPR013087">
    <property type="entry name" value="Znf_C2H2_type"/>
</dbReference>
<dbReference type="PANTHER" id="PTHR45848:SF4">
    <property type="entry name" value="DUAL SPECIFICITY PROTEIN PHOSPHATASE 12"/>
    <property type="match status" value="1"/>
</dbReference>
<dbReference type="PANTHER" id="PTHR45848">
    <property type="entry name" value="DUAL SPECIFICITY PROTEIN PHOSPHATASE 12 FAMILY MEMBER"/>
    <property type="match status" value="1"/>
</dbReference>
<dbReference type="Pfam" id="PF00782">
    <property type="entry name" value="DSPc"/>
    <property type="match status" value="1"/>
</dbReference>
<dbReference type="PIRSF" id="PIRSF000941">
    <property type="entry name" value="DUSP12"/>
    <property type="match status" value="1"/>
</dbReference>
<dbReference type="SMART" id="SM00195">
    <property type="entry name" value="DSPc"/>
    <property type="match status" value="1"/>
</dbReference>
<dbReference type="SUPFAM" id="SSF52799">
    <property type="entry name" value="(Phosphotyrosine protein) phosphatases II"/>
    <property type="match status" value="1"/>
</dbReference>
<dbReference type="PROSITE" id="PS50056">
    <property type="entry name" value="TYR_PHOSPHATASE_2"/>
    <property type="match status" value="1"/>
</dbReference>
<dbReference type="PROSITE" id="PS50054">
    <property type="entry name" value="TYR_PHOSPHATASE_DUAL"/>
    <property type="match status" value="1"/>
</dbReference>
<dbReference type="PROSITE" id="PS50157">
    <property type="entry name" value="ZINC_FINGER_C2H2_2"/>
    <property type="match status" value="1"/>
</dbReference>
<evidence type="ECO:0000250" key="1">
    <source>
        <dbReference type="UniProtKB" id="Q9JIM4"/>
    </source>
</evidence>
<evidence type="ECO:0000255" key="2">
    <source>
        <dbReference type="PROSITE-ProRule" id="PRU00160"/>
    </source>
</evidence>
<evidence type="ECO:0000269" key="3">
    <source>
    </source>
</evidence>
<evidence type="ECO:0000269" key="4">
    <source>
    </source>
</evidence>
<evidence type="ECO:0000305" key="5"/>
<evidence type="ECO:0000305" key="6">
    <source>
    </source>
</evidence>
<evidence type="ECO:0007744" key="7">
    <source>
        <dbReference type="PDB" id="4JNB"/>
    </source>
</evidence>
<evidence type="ECO:0007744" key="8">
    <source>
        <dbReference type="PDB" id="4KI9"/>
    </source>
</evidence>
<evidence type="ECO:0007744" key="9">
    <source>
    </source>
</evidence>
<evidence type="ECO:0007744" key="10">
    <source>
    </source>
</evidence>
<evidence type="ECO:0007744" key="11">
    <source>
    </source>
</evidence>
<evidence type="ECO:0007744" key="12">
    <source>
    </source>
</evidence>
<evidence type="ECO:0007829" key="13">
    <source>
        <dbReference type="PDB" id="4KI9"/>
    </source>
</evidence>